<name>SYK_PROM3</name>
<comment type="catalytic activity">
    <reaction evidence="1">
        <text>tRNA(Lys) + L-lysine + ATP = L-lysyl-tRNA(Lys) + AMP + diphosphate</text>
        <dbReference type="Rhea" id="RHEA:20792"/>
        <dbReference type="Rhea" id="RHEA-COMP:9696"/>
        <dbReference type="Rhea" id="RHEA-COMP:9697"/>
        <dbReference type="ChEBI" id="CHEBI:30616"/>
        <dbReference type="ChEBI" id="CHEBI:32551"/>
        <dbReference type="ChEBI" id="CHEBI:33019"/>
        <dbReference type="ChEBI" id="CHEBI:78442"/>
        <dbReference type="ChEBI" id="CHEBI:78529"/>
        <dbReference type="ChEBI" id="CHEBI:456215"/>
        <dbReference type="EC" id="6.1.1.6"/>
    </reaction>
</comment>
<comment type="cofactor">
    <cofactor evidence="1">
        <name>Mg(2+)</name>
        <dbReference type="ChEBI" id="CHEBI:18420"/>
    </cofactor>
    <text evidence="1">Binds 3 Mg(2+) ions per subunit.</text>
</comment>
<comment type="subunit">
    <text evidence="1">Homodimer.</text>
</comment>
<comment type="subcellular location">
    <subcellularLocation>
        <location evidence="1">Cytoplasm</location>
    </subcellularLocation>
</comment>
<comment type="similarity">
    <text evidence="1">Belongs to the class-II aminoacyl-tRNA synthetase family.</text>
</comment>
<organism>
    <name type="scientific">Prochlorococcus marinus (strain MIT 9303)</name>
    <dbReference type="NCBI Taxonomy" id="59922"/>
    <lineage>
        <taxon>Bacteria</taxon>
        <taxon>Bacillati</taxon>
        <taxon>Cyanobacteriota</taxon>
        <taxon>Cyanophyceae</taxon>
        <taxon>Synechococcales</taxon>
        <taxon>Prochlorococcaceae</taxon>
        <taxon>Prochlorococcus</taxon>
    </lineage>
</organism>
<protein>
    <recommendedName>
        <fullName evidence="1">Lysine--tRNA ligase</fullName>
        <ecNumber evidence="1">6.1.1.6</ecNumber>
    </recommendedName>
    <alternativeName>
        <fullName evidence="1">Lysyl-tRNA synthetase</fullName>
        <shortName evidence="1">LysRS</shortName>
    </alternativeName>
</protein>
<proteinExistence type="inferred from homology"/>
<gene>
    <name evidence="1" type="primary">lysS</name>
    <name type="ordered locus">P9303_01841</name>
</gene>
<dbReference type="EC" id="6.1.1.6" evidence="1"/>
<dbReference type="EMBL" id="CP000554">
    <property type="protein sequence ID" value="ABM76939.1"/>
    <property type="molecule type" value="Genomic_DNA"/>
</dbReference>
<dbReference type="RefSeq" id="WP_011824869.1">
    <property type="nucleotide sequence ID" value="NC_008820.1"/>
</dbReference>
<dbReference type="SMR" id="A2C629"/>
<dbReference type="STRING" id="59922.P9303_01841"/>
<dbReference type="KEGG" id="pmf:P9303_01841"/>
<dbReference type="HOGENOM" id="CLU_008255_6_0_3"/>
<dbReference type="BioCyc" id="PMAR59922:G1G80-178-MONOMER"/>
<dbReference type="Proteomes" id="UP000002274">
    <property type="component" value="Chromosome"/>
</dbReference>
<dbReference type="GO" id="GO:0005829">
    <property type="term" value="C:cytosol"/>
    <property type="evidence" value="ECO:0007669"/>
    <property type="project" value="TreeGrafter"/>
</dbReference>
<dbReference type="GO" id="GO:0005524">
    <property type="term" value="F:ATP binding"/>
    <property type="evidence" value="ECO:0007669"/>
    <property type="project" value="UniProtKB-UniRule"/>
</dbReference>
<dbReference type="GO" id="GO:0004824">
    <property type="term" value="F:lysine-tRNA ligase activity"/>
    <property type="evidence" value="ECO:0007669"/>
    <property type="project" value="UniProtKB-UniRule"/>
</dbReference>
<dbReference type="GO" id="GO:0000287">
    <property type="term" value="F:magnesium ion binding"/>
    <property type="evidence" value="ECO:0007669"/>
    <property type="project" value="UniProtKB-UniRule"/>
</dbReference>
<dbReference type="GO" id="GO:0000049">
    <property type="term" value="F:tRNA binding"/>
    <property type="evidence" value="ECO:0007669"/>
    <property type="project" value="TreeGrafter"/>
</dbReference>
<dbReference type="GO" id="GO:0006430">
    <property type="term" value="P:lysyl-tRNA aminoacylation"/>
    <property type="evidence" value="ECO:0007669"/>
    <property type="project" value="UniProtKB-UniRule"/>
</dbReference>
<dbReference type="CDD" id="cd00775">
    <property type="entry name" value="LysRS_core"/>
    <property type="match status" value="1"/>
</dbReference>
<dbReference type="CDD" id="cd04322">
    <property type="entry name" value="LysRS_N"/>
    <property type="match status" value="1"/>
</dbReference>
<dbReference type="FunFam" id="2.40.50.140:FF:000024">
    <property type="entry name" value="Lysine--tRNA ligase"/>
    <property type="match status" value="1"/>
</dbReference>
<dbReference type="FunFam" id="3.30.930.10:FF:000238">
    <property type="entry name" value="Lysine--tRNA ligase"/>
    <property type="match status" value="1"/>
</dbReference>
<dbReference type="Gene3D" id="3.30.930.10">
    <property type="entry name" value="Bira Bifunctional Protein, Domain 2"/>
    <property type="match status" value="1"/>
</dbReference>
<dbReference type="Gene3D" id="2.40.50.140">
    <property type="entry name" value="Nucleic acid-binding proteins"/>
    <property type="match status" value="1"/>
</dbReference>
<dbReference type="HAMAP" id="MF_00252">
    <property type="entry name" value="Lys_tRNA_synth_class2"/>
    <property type="match status" value="1"/>
</dbReference>
<dbReference type="InterPro" id="IPR004364">
    <property type="entry name" value="Aa-tRNA-synt_II"/>
</dbReference>
<dbReference type="InterPro" id="IPR006195">
    <property type="entry name" value="aa-tRNA-synth_II"/>
</dbReference>
<dbReference type="InterPro" id="IPR045864">
    <property type="entry name" value="aa-tRNA-synth_II/BPL/LPL"/>
</dbReference>
<dbReference type="InterPro" id="IPR002313">
    <property type="entry name" value="Lys-tRNA-ligase_II"/>
</dbReference>
<dbReference type="InterPro" id="IPR044136">
    <property type="entry name" value="Lys-tRNA-ligase_II_N"/>
</dbReference>
<dbReference type="InterPro" id="IPR018149">
    <property type="entry name" value="Lys-tRNA-synth_II_C"/>
</dbReference>
<dbReference type="InterPro" id="IPR012340">
    <property type="entry name" value="NA-bd_OB-fold"/>
</dbReference>
<dbReference type="InterPro" id="IPR004365">
    <property type="entry name" value="NA-bd_OB_tRNA"/>
</dbReference>
<dbReference type="NCBIfam" id="TIGR00499">
    <property type="entry name" value="lysS_bact"/>
    <property type="match status" value="1"/>
</dbReference>
<dbReference type="NCBIfam" id="NF001756">
    <property type="entry name" value="PRK00484.1"/>
    <property type="match status" value="1"/>
</dbReference>
<dbReference type="PANTHER" id="PTHR42918:SF15">
    <property type="entry name" value="LYSINE--TRNA LIGASE, CHLOROPLASTIC_MITOCHONDRIAL"/>
    <property type="match status" value="1"/>
</dbReference>
<dbReference type="PANTHER" id="PTHR42918">
    <property type="entry name" value="LYSYL-TRNA SYNTHETASE"/>
    <property type="match status" value="1"/>
</dbReference>
<dbReference type="Pfam" id="PF00152">
    <property type="entry name" value="tRNA-synt_2"/>
    <property type="match status" value="1"/>
</dbReference>
<dbReference type="Pfam" id="PF01336">
    <property type="entry name" value="tRNA_anti-codon"/>
    <property type="match status" value="1"/>
</dbReference>
<dbReference type="PRINTS" id="PR00982">
    <property type="entry name" value="TRNASYNTHLYS"/>
</dbReference>
<dbReference type="SUPFAM" id="SSF55681">
    <property type="entry name" value="Class II aaRS and biotin synthetases"/>
    <property type="match status" value="1"/>
</dbReference>
<dbReference type="SUPFAM" id="SSF50249">
    <property type="entry name" value="Nucleic acid-binding proteins"/>
    <property type="match status" value="1"/>
</dbReference>
<dbReference type="PROSITE" id="PS50862">
    <property type="entry name" value="AA_TRNA_LIGASE_II"/>
    <property type="match status" value="1"/>
</dbReference>
<evidence type="ECO:0000255" key="1">
    <source>
        <dbReference type="HAMAP-Rule" id="MF_00252"/>
    </source>
</evidence>
<reference key="1">
    <citation type="journal article" date="2007" name="PLoS Genet.">
        <title>Patterns and implications of gene gain and loss in the evolution of Prochlorococcus.</title>
        <authorList>
            <person name="Kettler G.C."/>
            <person name="Martiny A.C."/>
            <person name="Huang K."/>
            <person name="Zucker J."/>
            <person name="Coleman M.L."/>
            <person name="Rodrigue S."/>
            <person name="Chen F."/>
            <person name="Lapidus A."/>
            <person name="Ferriera S."/>
            <person name="Johnson J."/>
            <person name="Steglich C."/>
            <person name="Church G.M."/>
            <person name="Richardson P."/>
            <person name="Chisholm S.W."/>
        </authorList>
    </citation>
    <scope>NUCLEOTIDE SEQUENCE [LARGE SCALE GENOMIC DNA]</scope>
    <source>
        <strain>MIT 9303</strain>
    </source>
</reference>
<sequence>MARSVLSALSELRETRLEKAQALKELGNGPYALRFESSHRTANLQADHADLAKGEERLLSVSVAGRVMARRVMGKLAFYTLADETGTIQLYLDKATIDAAASNELASGTFVQLTTLVDAGDWIGVTGVLRRTDRGELSVKVQQWQILSKSLQPLPDKWHGLADVEKRYRQRYLDLIVSPQSRETFRRRALMVSAIRRWLDDRAFLEIETPVLQAEAGGAEARPFITHHNTLDLPLYLRIATELHLKRLVVGGFERVYELGRIFRNEGMSTRHNPEFTSVEVYQAYADYIDMMVLTEQLISSVCTQICGSTRITYQGIEIDLTPPWRRASMHELVQEATGLDFMGFADRAVAASAMARAGLEVPSKADSVGRLLNEAFEQAVEVSLIQPTFVLDYPIEISPLARQHRSKPGLVERFELFIVGRETANAFSELIDPLDQRQRLEAQQARRQAGDLEAHGVDEDFLQALEVGMPPTGGLGIGIDRLVMLFTDSPSIRDVIAFPLLRPELKT</sequence>
<keyword id="KW-0030">Aminoacyl-tRNA synthetase</keyword>
<keyword id="KW-0067">ATP-binding</keyword>
<keyword id="KW-0963">Cytoplasm</keyword>
<keyword id="KW-0436">Ligase</keyword>
<keyword id="KW-0460">Magnesium</keyword>
<keyword id="KW-0479">Metal-binding</keyword>
<keyword id="KW-0547">Nucleotide-binding</keyword>
<keyword id="KW-0648">Protein biosynthesis</keyword>
<feature type="chain" id="PRO_1000012903" description="Lysine--tRNA ligase">
    <location>
        <begin position="1"/>
        <end position="508"/>
    </location>
</feature>
<feature type="binding site" evidence="1">
    <location>
        <position position="416"/>
    </location>
    <ligand>
        <name>Mg(2+)</name>
        <dbReference type="ChEBI" id="CHEBI:18420"/>
        <label>1</label>
    </ligand>
</feature>
<feature type="binding site" evidence="1">
    <location>
        <position position="423"/>
    </location>
    <ligand>
        <name>Mg(2+)</name>
        <dbReference type="ChEBI" id="CHEBI:18420"/>
        <label>1</label>
    </ligand>
</feature>
<feature type="binding site" evidence="1">
    <location>
        <position position="423"/>
    </location>
    <ligand>
        <name>Mg(2+)</name>
        <dbReference type="ChEBI" id="CHEBI:18420"/>
        <label>2</label>
    </ligand>
</feature>
<accession>A2C629</accession>